<proteinExistence type="evidence at transcript level"/>
<keyword id="KW-0430">Lectin</keyword>
<keyword id="KW-1185">Reference proteome</keyword>
<sequence>MAFRMSRDHADFVAHGGTEWDDGAFVNVKKIKIFHDWAGITLVQFDYIDGTGAIVSGLDHGTEPFQFDREHGRVPVEGARAEFWLRDDEYITIVTAFGGYCVRKIEFITNKRTFDFGGFN</sequence>
<feature type="chain" id="PRO_0000430396" description="Jacalin-related lectin 39">
    <location>
        <begin position="1"/>
        <end position="120"/>
    </location>
</feature>
<feature type="domain" description="Jacalin-type lectin" evidence="1">
    <location>
        <begin position="6"/>
        <end position="120"/>
    </location>
</feature>
<reference key="1">
    <citation type="journal article" date="2000" name="Nature">
        <title>Sequence and analysis of chromosome 3 of the plant Arabidopsis thaliana.</title>
        <authorList>
            <person name="Salanoubat M."/>
            <person name="Lemcke K."/>
            <person name="Rieger M."/>
            <person name="Ansorge W."/>
            <person name="Unseld M."/>
            <person name="Fartmann B."/>
            <person name="Valle G."/>
            <person name="Bloecker H."/>
            <person name="Perez-Alonso M."/>
            <person name="Obermaier B."/>
            <person name="Delseny M."/>
            <person name="Boutry M."/>
            <person name="Grivell L.A."/>
            <person name="Mache R."/>
            <person name="Puigdomenech P."/>
            <person name="De Simone V."/>
            <person name="Choisne N."/>
            <person name="Artiguenave F."/>
            <person name="Robert C."/>
            <person name="Brottier P."/>
            <person name="Wincker P."/>
            <person name="Cattolico L."/>
            <person name="Weissenbach J."/>
            <person name="Saurin W."/>
            <person name="Quetier F."/>
            <person name="Schaefer M."/>
            <person name="Mueller-Auer S."/>
            <person name="Gabel C."/>
            <person name="Fuchs M."/>
            <person name="Benes V."/>
            <person name="Wurmbach E."/>
            <person name="Drzonek H."/>
            <person name="Erfle H."/>
            <person name="Jordan N."/>
            <person name="Bangert S."/>
            <person name="Wiedelmann R."/>
            <person name="Kranz H."/>
            <person name="Voss H."/>
            <person name="Holland R."/>
            <person name="Brandt P."/>
            <person name="Nyakatura G."/>
            <person name="Vezzi A."/>
            <person name="D'Angelo M."/>
            <person name="Pallavicini A."/>
            <person name="Toppo S."/>
            <person name="Simionati B."/>
            <person name="Conrad A."/>
            <person name="Hornischer K."/>
            <person name="Kauer G."/>
            <person name="Loehnert T.-H."/>
            <person name="Nordsiek G."/>
            <person name="Reichelt J."/>
            <person name="Scharfe M."/>
            <person name="Schoen O."/>
            <person name="Bargues M."/>
            <person name="Terol J."/>
            <person name="Climent J."/>
            <person name="Navarro P."/>
            <person name="Collado C."/>
            <person name="Perez-Perez A."/>
            <person name="Ottenwaelder B."/>
            <person name="Duchemin D."/>
            <person name="Cooke R."/>
            <person name="Laudie M."/>
            <person name="Berger-Llauro C."/>
            <person name="Purnelle B."/>
            <person name="Masuy D."/>
            <person name="de Haan M."/>
            <person name="Maarse A.C."/>
            <person name="Alcaraz J.-P."/>
            <person name="Cottet A."/>
            <person name="Casacuberta E."/>
            <person name="Monfort A."/>
            <person name="Argiriou A."/>
            <person name="Flores M."/>
            <person name="Liguori R."/>
            <person name="Vitale D."/>
            <person name="Mannhaupt G."/>
            <person name="Haase D."/>
            <person name="Schoof H."/>
            <person name="Rudd S."/>
            <person name="Zaccaria P."/>
            <person name="Mewes H.-W."/>
            <person name="Mayer K.F.X."/>
            <person name="Kaul S."/>
            <person name="Town C.D."/>
            <person name="Koo H.L."/>
            <person name="Tallon L.J."/>
            <person name="Jenkins J."/>
            <person name="Rooney T."/>
            <person name="Rizzo M."/>
            <person name="Walts A."/>
            <person name="Utterback T."/>
            <person name="Fujii C.Y."/>
            <person name="Shea T.P."/>
            <person name="Creasy T.H."/>
            <person name="Haas B."/>
            <person name="Maiti R."/>
            <person name="Wu D."/>
            <person name="Peterson J."/>
            <person name="Van Aken S."/>
            <person name="Pai G."/>
            <person name="Militscher J."/>
            <person name="Sellers P."/>
            <person name="Gill J.E."/>
            <person name="Feldblyum T.V."/>
            <person name="Preuss D."/>
            <person name="Lin X."/>
            <person name="Nierman W.C."/>
            <person name="Salzberg S.L."/>
            <person name="White O."/>
            <person name="Venter J.C."/>
            <person name="Fraser C.M."/>
            <person name="Kaneko T."/>
            <person name="Nakamura Y."/>
            <person name="Sato S."/>
            <person name="Kato T."/>
            <person name="Asamizu E."/>
            <person name="Sasamoto S."/>
            <person name="Kimura T."/>
            <person name="Idesawa K."/>
            <person name="Kawashima K."/>
            <person name="Kishida Y."/>
            <person name="Kiyokawa C."/>
            <person name="Kohara M."/>
            <person name="Matsumoto M."/>
            <person name="Matsuno A."/>
            <person name="Muraki A."/>
            <person name="Nakayama S."/>
            <person name="Nakazaki N."/>
            <person name="Shinpo S."/>
            <person name="Takeuchi C."/>
            <person name="Wada T."/>
            <person name="Watanabe A."/>
            <person name="Yamada M."/>
            <person name="Yasuda M."/>
            <person name="Tabata S."/>
        </authorList>
    </citation>
    <scope>NUCLEOTIDE SEQUENCE [LARGE SCALE GENOMIC DNA]</scope>
    <source>
        <strain>cv. Columbia</strain>
    </source>
</reference>
<reference key="2">
    <citation type="journal article" date="2017" name="Plant J.">
        <title>Araport11: a complete reannotation of the Arabidopsis thaliana reference genome.</title>
        <authorList>
            <person name="Cheng C.Y."/>
            <person name="Krishnakumar V."/>
            <person name="Chan A.P."/>
            <person name="Thibaud-Nissen F."/>
            <person name="Schobel S."/>
            <person name="Town C.D."/>
        </authorList>
    </citation>
    <scope>GENOME REANNOTATION</scope>
    <source>
        <strain>cv. Columbia</strain>
    </source>
</reference>
<reference key="3">
    <citation type="submission" date="2005-02" db="EMBL/GenBank/DDBJ databases">
        <authorList>
            <person name="Underwood B.A."/>
            <person name="Xiao Y.-L."/>
            <person name="Moskal W.A. Jr."/>
            <person name="Monaghan E.L."/>
            <person name="Wang W."/>
            <person name="Redman J.C."/>
            <person name="Wu H.C."/>
            <person name="Utterback T."/>
            <person name="Town C.D."/>
        </authorList>
    </citation>
    <scope>NUCLEOTIDE SEQUENCE [LARGE SCALE MRNA]</scope>
    <source>
        <strain>cv. Columbia</strain>
    </source>
</reference>
<reference key="4">
    <citation type="journal article" date="2008" name="Plant Cell Physiol.">
        <title>Antagonistic jacalin-related lectins regulate the size of ER body-type beta-glucosidase complexes in Arabidopsis thaliana.</title>
        <authorList>
            <person name="Nagano A.J."/>
            <person name="Fukao Y."/>
            <person name="Fujiwara M."/>
            <person name="Nishimura M."/>
            <person name="Hara-Nishimura I."/>
        </authorList>
    </citation>
    <scope>GENE FAMILY</scope>
    <scope>NOMENCLATURE</scope>
</reference>
<accession>Q9M1A6</accession>
<protein>
    <recommendedName>
        <fullName>Jacalin-related lectin 39</fullName>
    </recommendedName>
</protein>
<comment type="similarity">
    <text evidence="1 2">Belongs to the jacalin lectin family.</text>
</comment>
<gene>
    <name type="primary">JAL39</name>
    <name type="ordered locus">At3g59620</name>
    <name type="ORF">T16L24.170</name>
</gene>
<evidence type="ECO:0000255" key="1">
    <source>
        <dbReference type="PROSITE-ProRule" id="PRU01088"/>
    </source>
</evidence>
<evidence type="ECO:0000305" key="2"/>
<dbReference type="EMBL" id="AL138659">
    <property type="protein sequence ID" value="CAB75459.1"/>
    <property type="molecule type" value="Genomic_DNA"/>
</dbReference>
<dbReference type="EMBL" id="CP002686">
    <property type="protein sequence ID" value="AEE79946.1"/>
    <property type="molecule type" value="Genomic_DNA"/>
</dbReference>
<dbReference type="EMBL" id="CP002686">
    <property type="protein sequence ID" value="ANM64031.1"/>
    <property type="molecule type" value="Genomic_DNA"/>
</dbReference>
<dbReference type="EMBL" id="AY735624">
    <property type="protein sequence ID" value="AAU44494.1"/>
    <property type="molecule type" value="mRNA"/>
</dbReference>
<dbReference type="EMBL" id="AY924800">
    <property type="protein sequence ID" value="AAX23875.1"/>
    <property type="molecule type" value="mRNA"/>
</dbReference>
<dbReference type="PIR" id="T49303">
    <property type="entry name" value="T49303"/>
</dbReference>
<dbReference type="RefSeq" id="NP_001326082.1">
    <property type="nucleotide sequence ID" value="NM_001339990.1"/>
</dbReference>
<dbReference type="RefSeq" id="NP_191521.1">
    <property type="nucleotide sequence ID" value="NM_115824.4"/>
</dbReference>
<dbReference type="SMR" id="Q9M1A6"/>
<dbReference type="FunCoup" id="Q9M1A6">
    <property type="interactions" value="14"/>
</dbReference>
<dbReference type="PaxDb" id="3702-AT3G59620.1"/>
<dbReference type="DNASU" id="825131"/>
<dbReference type="EnsemblPlants" id="AT3G59620.1">
    <property type="protein sequence ID" value="AT3G59620.1"/>
    <property type="gene ID" value="AT3G59620"/>
</dbReference>
<dbReference type="EnsemblPlants" id="AT3G59620.2">
    <property type="protein sequence ID" value="AT3G59620.2"/>
    <property type="gene ID" value="AT3G59620"/>
</dbReference>
<dbReference type="GeneID" id="825131"/>
<dbReference type="Gramene" id="AT3G59620.1">
    <property type="protein sequence ID" value="AT3G59620.1"/>
    <property type="gene ID" value="AT3G59620"/>
</dbReference>
<dbReference type="Gramene" id="AT3G59620.2">
    <property type="protein sequence ID" value="AT3G59620.2"/>
    <property type="gene ID" value="AT3G59620"/>
</dbReference>
<dbReference type="KEGG" id="ath:AT3G59620"/>
<dbReference type="Araport" id="AT3G59620"/>
<dbReference type="TAIR" id="AT3G59620"/>
<dbReference type="HOGENOM" id="CLU_2052858_0_0_1"/>
<dbReference type="InParanoid" id="Q9M1A6"/>
<dbReference type="PhylomeDB" id="Q9M1A6"/>
<dbReference type="PRO" id="PR:Q9M1A6"/>
<dbReference type="Proteomes" id="UP000006548">
    <property type="component" value="Chromosome 3"/>
</dbReference>
<dbReference type="ExpressionAtlas" id="Q9M1A6">
    <property type="expression patterns" value="baseline and differential"/>
</dbReference>
<dbReference type="GO" id="GO:0030246">
    <property type="term" value="F:carbohydrate binding"/>
    <property type="evidence" value="ECO:0007669"/>
    <property type="project" value="UniProtKB-KW"/>
</dbReference>
<dbReference type="Gene3D" id="2.100.10.30">
    <property type="entry name" value="Jacalin-like lectin domain"/>
    <property type="match status" value="1"/>
</dbReference>
<dbReference type="InterPro" id="IPR001229">
    <property type="entry name" value="Jacalin-like_lectin_dom"/>
</dbReference>
<dbReference type="InterPro" id="IPR036404">
    <property type="entry name" value="Jacalin-like_lectin_dom_sf"/>
</dbReference>
<dbReference type="PANTHER" id="PTHR47293">
    <property type="entry name" value="JACALIN-RELATED LECTIN 3"/>
    <property type="match status" value="1"/>
</dbReference>
<dbReference type="PANTHER" id="PTHR47293:SF7">
    <property type="entry name" value="JACALIN-RELATED LECTIN 34-RELATED"/>
    <property type="match status" value="1"/>
</dbReference>
<dbReference type="Pfam" id="PF01419">
    <property type="entry name" value="Jacalin"/>
    <property type="match status" value="1"/>
</dbReference>
<dbReference type="SMART" id="SM00915">
    <property type="entry name" value="Jacalin"/>
    <property type="match status" value="1"/>
</dbReference>
<dbReference type="SUPFAM" id="SSF51101">
    <property type="entry name" value="Mannose-binding lectins"/>
    <property type="match status" value="1"/>
</dbReference>
<dbReference type="PROSITE" id="PS51752">
    <property type="entry name" value="JACALIN_LECTIN"/>
    <property type="match status" value="1"/>
</dbReference>
<name>JAL39_ARATH</name>
<organism>
    <name type="scientific">Arabidopsis thaliana</name>
    <name type="common">Mouse-ear cress</name>
    <dbReference type="NCBI Taxonomy" id="3702"/>
    <lineage>
        <taxon>Eukaryota</taxon>
        <taxon>Viridiplantae</taxon>
        <taxon>Streptophyta</taxon>
        <taxon>Embryophyta</taxon>
        <taxon>Tracheophyta</taxon>
        <taxon>Spermatophyta</taxon>
        <taxon>Magnoliopsida</taxon>
        <taxon>eudicotyledons</taxon>
        <taxon>Gunneridae</taxon>
        <taxon>Pentapetalae</taxon>
        <taxon>rosids</taxon>
        <taxon>malvids</taxon>
        <taxon>Brassicales</taxon>
        <taxon>Brassicaceae</taxon>
        <taxon>Camelineae</taxon>
        <taxon>Arabidopsis</taxon>
    </lineage>
</organism>